<protein>
    <recommendedName>
        <fullName evidence="1">DNA-directed RNA polymerase subunit beta</fullName>
        <shortName evidence="1">RNAP subunit beta</shortName>
        <ecNumber evidence="1">2.7.7.6</ecNumber>
    </recommendedName>
    <alternativeName>
        <fullName evidence="1">RNA polymerase subunit beta</fullName>
    </alternativeName>
    <alternativeName>
        <fullName evidence="1">Transcriptase subunit beta</fullName>
    </alternativeName>
</protein>
<feature type="chain" id="PRO_0000048002" description="DNA-directed RNA polymerase subunit beta">
    <location>
        <begin position="1"/>
        <end position="1342"/>
    </location>
</feature>
<comment type="function">
    <text evidence="1">DNA-dependent RNA polymerase catalyzes the transcription of DNA into RNA using the four ribonucleoside triphosphates as substrates.</text>
</comment>
<comment type="catalytic activity">
    <reaction evidence="1">
        <text>RNA(n) + a ribonucleoside 5'-triphosphate = RNA(n+1) + diphosphate</text>
        <dbReference type="Rhea" id="RHEA:21248"/>
        <dbReference type="Rhea" id="RHEA-COMP:14527"/>
        <dbReference type="Rhea" id="RHEA-COMP:17342"/>
        <dbReference type="ChEBI" id="CHEBI:33019"/>
        <dbReference type="ChEBI" id="CHEBI:61557"/>
        <dbReference type="ChEBI" id="CHEBI:140395"/>
        <dbReference type="EC" id="2.7.7.6"/>
    </reaction>
</comment>
<comment type="subunit">
    <text evidence="1">The RNAP catalytic core consists of 2 alpha, 1 beta, 1 beta' and 1 omega subunit. When a sigma factor is associated with the core the holoenzyme is formed, which can initiate transcription.</text>
</comment>
<comment type="similarity">
    <text evidence="1">Belongs to the RNA polymerase beta chain family.</text>
</comment>
<keyword id="KW-0240">DNA-directed RNA polymerase</keyword>
<keyword id="KW-0548">Nucleotidyltransferase</keyword>
<keyword id="KW-1185">Reference proteome</keyword>
<keyword id="KW-0804">Transcription</keyword>
<keyword id="KW-0808">Transferase</keyword>
<dbReference type="EC" id="2.7.7.6" evidence="1"/>
<dbReference type="EMBL" id="AL590842">
    <property type="protein sequence ID" value="CAL22334.1"/>
    <property type="molecule type" value="Genomic_DNA"/>
</dbReference>
<dbReference type="EMBL" id="AE009952">
    <property type="protein sequence ID" value="AAM84073.1"/>
    <property type="molecule type" value="Genomic_DNA"/>
</dbReference>
<dbReference type="EMBL" id="AE017042">
    <property type="protein sequence ID" value="AAS63280.1"/>
    <property type="molecule type" value="Genomic_DNA"/>
</dbReference>
<dbReference type="PIR" id="AC0456">
    <property type="entry name" value="AC0456"/>
</dbReference>
<dbReference type="RefSeq" id="WP_002210676.1">
    <property type="nucleotide sequence ID" value="NZ_WUCM01000099.1"/>
</dbReference>
<dbReference type="RefSeq" id="YP_002348627.1">
    <property type="nucleotide sequence ID" value="NC_003143.1"/>
</dbReference>
<dbReference type="SMR" id="Q8ZAP5"/>
<dbReference type="IntAct" id="Q8ZAP5">
    <property type="interactions" value="1"/>
</dbReference>
<dbReference type="STRING" id="214092.YPO3747"/>
<dbReference type="PaxDb" id="214092-YPO3747"/>
<dbReference type="EnsemblBacteria" id="AAS63280">
    <property type="protein sequence ID" value="AAS63280"/>
    <property type="gene ID" value="YP_3110"/>
</dbReference>
<dbReference type="GeneID" id="57974971"/>
<dbReference type="KEGG" id="ype:YPO3747"/>
<dbReference type="KEGG" id="ypk:y0484"/>
<dbReference type="KEGG" id="ypm:YP_3110"/>
<dbReference type="PATRIC" id="fig|214092.21.peg.4265"/>
<dbReference type="eggNOG" id="COG0085">
    <property type="taxonomic scope" value="Bacteria"/>
</dbReference>
<dbReference type="HOGENOM" id="CLU_000524_4_0_6"/>
<dbReference type="OMA" id="FMTWEGY"/>
<dbReference type="OrthoDB" id="9803954at2"/>
<dbReference type="Proteomes" id="UP000000815">
    <property type="component" value="Chromosome"/>
</dbReference>
<dbReference type="Proteomes" id="UP000001019">
    <property type="component" value="Chromosome"/>
</dbReference>
<dbReference type="Proteomes" id="UP000002490">
    <property type="component" value="Chromosome"/>
</dbReference>
<dbReference type="GO" id="GO:0000428">
    <property type="term" value="C:DNA-directed RNA polymerase complex"/>
    <property type="evidence" value="ECO:0007669"/>
    <property type="project" value="UniProtKB-KW"/>
</dbReference>
<dbReference type="GO" id="GO:0003677">
    <property type="term" value="F:DNA binding"/>
    <property type="evidence" value="ECO:0007669"/>
    <property type="project" value="UniProtKB-UniRule"/>
</dbReference>
<dbReference type="GO" id="GO:0003899">
    <property type="term" value="F:DNA-directed RNA polymerase activity"/>
    <property type="evidence" value="ECO:0007669"/>
    <property type="project" value="UniProtKB-UniRule"/>
</dbReference>
<dbReference type="GO" id="GO:0032549">
    <property type="term" value="F:ribonucleoside binding"/>
    <property type="evidence" value="ECO:0007669"/>
    <property type="project" value="InterPro"/>
</dbReference>
<dbReference type="GO" id="GO:0006351">
    <property type="term" value="P:DNA-templated transcription"/>
    <property type="evidence" value="ECO:0007669"/>
    <property type="project" value="UniProtKB-UniRule"/>
</dbReference>
<dbReference type="CDD" id="cd00653">
    <property type="entry name" value="RNA_pol_B_RPB2"/>
    <property type="match status" value="1"/>
</dbReference>
<dbReference type="FunFam" id="2.30.150.10:FF:000001">
    <property type="entry name" value="DNA-directed RNA polymerase subunit beta"/>
    <property type="match status" value="1"/>
</dbReference>
<dbReference type="FunFam" id="2.40.270.10:FF:000003">
    <property type="entry name" value="DNA-directed RNA polymerase subunit beta"/>
    <property type="match status" value="1"/>
</dbReference>
<dbReference type="FunFam" id="2.40.270.10:FF:000004">
    <property type="entry name" value="DNA-directed RNA polymerase subunit beta"/>
    <property type="match status" value="1"/>
</dbReference>
<dbReference type="FunFam" id="2.40.50.100:FF:000006">
    <property type="entry name" value="DNA-directed RNA polymerase subunit beta"/>
    <property type="match status" value="1"/>
</dbReference>
<dbReference type="FunFam" id="2.40.50.150:FF:000001">
    <property type="entry name" value="DNA-directed RNA polymerase subunit beta"/>
    <property type="match status" value="1"/>
</dbReference>
<dbReference type="FunFam" id="3.90.1100.10:FF:000002">
    <property type="entry name" value="DNA-directed RNA polymerase subunit beta"/>
    <property type="match status" value="1"/>
</dbReference>
<dbReference type="FunFam" id="3.90.1110.10:FF:000001">
    <property type="entry name" value="DNA-directed RNA polymerase subunit beta"/>
    <property type="match status" value="1"/>
</dbReference>
<dbReference type="FunFam" id="3.90.1110.10:FF:000004">
    <property type="entry name" value="DNA-directed RNA polymerase subunit beta"/>
    <property type="match status" value="1"/>
</dbReference>
<dbReference type="FunFam" id="3.90.1800.10:FF:000001">
    <property type="entry name" value="DNA-directed RNA polymerase subunit beta"/>
    <property type="match status" value="1"/>
</dbReference>
<dbReference type="Gene3D" id="2.40.50.100">
    <property type="match status" value="1"/>
</dbReference>
<dbReference type="Gene3D" id="2.40.50.150">
    <property type="match status" value="1"/>
</dbReference>
<dbReference type="Gene3D" id="3.90.1100.10">
    <property type="match status" value="2"/>
</dbReference>
<dbReference type="Gene3D" id="2.30.150.10">
    <property type="entry name" value="DNA-directed RNA polymerase, beta subunit, external 1 domain"/>
    <property type="match status" value="1"/>
</dbReference>
<dbReference type="Gene3D" id="2.40.270.10">
    <property type="entry name" value="DNA-directed RNA polymerase, subunit 2, domain 6"/>
    <property type="match status" value="1"/>
</dbReference>
<dbReference type="Gene3D" id="3.90.1800.10">
    <property type="entry name" value="RNA polymerase alpha subunit dimerisation domain"/>
    <property type="match status" value="1"/>
</dbReference>
<dbReference type="Gene3D" id="3.90.1110.10">
    <property type="entry name" value="RNA polymerase Rpb2, domain 2"/>
    <property type="match status" value="1"/>
</dbReference>
<dbReference type="HAMAP" id="MF_01321">
    <property type="entry name" value="RNApol_bact_RpoB"/>
    <property type="match status" value="1"/>
</dbReference>
<dbReference type="InterPro" id="IPR042107">
    <property type="entry name" value="DNA-dir_RNA_pol_bsu_ext_1_sf"/>
</dbReference>
<dbReference type="InterPro" id="IPR019462">
    <property type="entry name" value="DNA-dir_RNA_pol_bsu_external_1"/>
</dbReference>
<dbReference type="InterPro" id="IPR015712">
    <property type="entry name" value="DNA-dir_RNA_pol_su2"/>
</dbReference>
<dbReference type="InterPro" id="IPR007120">
    <property type="entry name" value="DNA-dir_RNAP_su2_dom"/>
</dbReference>
<dbReference type="InterPro" id="IPR037033">
    <property type="entry name" value="DNA-dir_RNAP_su2_hyb_sf"/>
</dbReference>
<dbReference type="InterPro" id="IPR010243">
    <property type="entry name" value="RNA_pol_bsu_bac"/>
</dbReference>
<dbReference type="InterPro" id="IPR007121">
    <property type="entry name" value="RNA_pol_bsu_CS"/>
</dbReference>
<dbReference type="InterPro" id="IPR007644">
    <property type="entry name" value="RNA_pol_bsu_protrusion"/>
</dbReference>
<dbReference type="InterPro" id="IPR007642">
    <property type="entry name" value="RNA_pol_Rpb2_2"/>
</dbReference>
<dbReference type="InterPro" id="IPR037034">
    <property type="entry name" value="RNA_pol_Rpb2_2_sf"/>
</dbReference>
<dbReference type="InterPro" id="IPR007645">
    <property type="entry name" value="RNA_pol_Rpb2_3"/>
</dbReference>
<dbReference type="InterPro" id="IPR007641">
    <property type="entry name" value="RNA_pol_Rpb2_7"/>
</dbReference>
<dbReference type="InterPro" id="IPR014724">
    <property type="entry name" value="RNA_pol_RPB2_OB-fold"/>
</dbReference>
<dbReference type="NCBIfam" id="NF001616">
    <property type="entry name" value="PRK00405.1"/>
    <property type="match status" value="1"/>
</dbReference>
<dbReference type="NCBIfam" id="TIGR02013">
    <property type="entry name" value="rpoB"/>
    <property type="match status" value="1"/>
</dbReference>
<dbReference type="PANTHER" id="PTHR20856">
    <property type="entry name" value="DNA-DIRECTED RNA POLYMERASE I SUBUNIT 2"/>
    <property type="match status" value="1"/>
</dbReference>
<dbReference type="Pfam" id="PF04563">
    <property type="entry name" value="RNA_pol_Rpb2_1"/>
    <property type="match status" value="1"/>
</dbReference>
<dbReference type="Pfam" id="PF04561">
    <property type="entry name" value="RNA_pol_Rpb2_2"/>
    <property type="match status" value="2"/>
</dbReference>
<dbReference type="Pfam" id="PF04565">
    <property type="entry name" value="RNA_pol_Rpb2_3"/>
    <property type="match status" value="1"/>
</dbReference>
<dbReference type="Pfam" id="PF10385">
    <property type="entry name" value="RNA_pol_Rpb2_45"/>
    <property type="match status" value="1"/>
</dbReference>
<dbReference type="Pfam" id="PF00562">
    <property type="entry name" value="RNA_pol_Rpb2_6"/>
    <property type="match status" value="1"/>
</dbReference>
<dbReference type="Pfam" id="PF04560">
    <property type="entry name" value="RNA_pol_Rpb2_7"/>
    <property type="match status" value="1"/>
</dbReference>
<dbReference type="SUPFAM" id="SSF64484">
    <property type="entry name" value="beta and beta-prime subunits of DNA dependent RNA-polymerase"/>
    <property type="match status" value="1"/>
</dbReference>
<dbReference type="PROSITE" id="PS01166">
    <property type="entry name" value="RNA_POL_BETA"/>
    <property type="match status" value="1"/>
</dbReference>
<name>RPOB_YERPE</name>
<gene>
    <name evidence="1" type="primary">rpoB</name>
    <name type="ordered locus">YPO3747</name>
    <name type="ordered locus">y0484</name>
    <name type="ordered locus">YP_3110</name>
</gene>
<sequence length="1342" mass="150389">MVYSYTEKKRIRKDFGKRPQVLDIPYLLSIQLDSFQKFIEQDPEGQHGLEAAFRSVFPIQSYSGNSELQYVSYRLGEPVFDVKECQIRGVTYSAPLRVKLRLVIYEREAPEGTVKDIKEQEVYMGEIPLMTENGTFVINGTERVIVSQLHRSPGVFFDSDKGKTHSSGKVLYNARIIPYRGSWLDFEFDPKDNLFVRIDRRRKLPATIILRALNFTTAQILDLFFEKVVFEIRDNKLQMELVPERLRGETASFDIEANGKVYVEKARRITARHIRQLEKDGIDRIEVPVEYIAGKVVAKDYVDASTGELICAANMELSLDLLAKLSQAGHKQIETLFTNDLDHGAYISETLRVDPTSDRLSALVEIYRMMRPGEPPTREAAENLFENLFFSEDRYDLSAVGRMKFNRSLLRDEIEGSGILSKEDITEVMKKLIDIRNGRGEVDDIDHLGNRRIRSVGEMAENQFRVGLVRVERAVKERLSLGDLDTLMPQDMINAKPISAAVKEFFGSSQLSQFMDQNNPLSEITHKRRISALGPGGLTRERAGFEVRDVHPTHYGRVCPIETPEGPNIGLINSLSVYAQTNEYGFLETPYRRVRDGVVTDEINYLSAIEEGNFVIAQANSNLDDEGRFLEDLVTCRSKGESSLFSREQVDYMDVSTQQIVSVGASLIPFLEHDDANRALMGANMQRQAVPTLRADKPLVGTGMERAVAVDSGVTSVAKRGGTVQYVDASRIVIKVNEDEMHPGEAGIDIYNLTKYTRSNQNTCINQMPCVNLGEPIERGDVLADGPSTDLGELALGQNMRVAFMPWNGYNFEDSILVSERVVQEDRFTTIHIQELACVSRDTKLGPEEITADIPNVGEAALSKLDESGIVYIGAEVTGGDILVGKVTPKGETQLTPEEKLLRAIFGEKASDVKDSSLRVPNGVSGTVIDVQVFTRDGVEKDKRALEIEEMQLKQAKKDLTEELQILEAGLFARIHAVLVSGGIEAEKLSKLPRERWLELGLTDEDKQNQLEQLAEQYDEMKSEFEKKMDAKRRKITQGDDLAPGVLKIVKVYLAVKRQIQPGDKMAGRHGNKGVISKINPIEDMPYDENGTPVDIVLNPLGVPSRMNIGQILETHLGMAAKGIGEKINAMLKKQEEVAKLREFIQKAYDLGDNVCQKVDLSTFTDDEVLRLAENLKKGMPIATPVFDGATEKEIKELLQLGGLPTSGQITLFDGRTGEQFERQVTVGYMYMLKLNHLVDDKMHARSTGSYSLVTQQPLGGKAQFGGQRFGEMEVWALEAYGAAYTLQEMLTVKSDDVNGRTKMYKNIVDGDHRMEPGMPESFNVLLKEIRSLGINIELEEE</sequence>
<organism>
    <name type="scientific">Yersinia pestis</name>
    <dbReference type="NCBI Taxonomy" id="632"/>
    <lineage>
        <taxon>Bacteria</taxon>
        <taxon>Pseudomonadati</taxon>
        <taxon>Pseudomonadota</taxon>
        <taxon>Gammaproteobacteria</taxon>
        <taxon>Enterobacterales</taxon>
        <taxon>Yersiniaceae</taxon>
        <taxon>Yersinia</taxon>
    </lineage>
</organism>
<proteinExistence type="inferred from homology"/>
<reference key="1">
    <citation type="journal article" date="2001" name="Nature">
        <title>Genome sequence of Yersinia pestis, the causative agent of plague.</title>
        <authorList>
            <person name="Parkhill J."/>
            <person name="Wren B.W."/>
            <person name="Thomson N.R."/>
            <person name="Titball R.W."/>
            <person name="Holden M.T.G."/>
            <person name="Prentice M.B."/>
            <person name="Sebaihia M."/>
            <person name="James K.D."/>
            <person name="Churcher C.M."/>
            <person name="Mungall K.L."/>
            <person name="Baker S."/>
            <person name="Basham D."/>
            <person name="Bentley S.D."/>
            <person name="Brooks K."/>
            <person name="Cerdeno-Tarraga A.-M."/>
            <person name="Chillingworth T."/>
            <person name="Cronin A."/>
            <person name="Davies R.M."/>
            <person name="Davis P."/>
            <person name="Dougan G."/>
            <person name="Feltwell T."/>
            <person name="Hamlin N."/>
            <person name="Holroyd S."/>
            <person name="Jagels K."/>
            <person name="Karlyshev A.V."/>
            <person name="Leather S."/>
            <person name="Moule S."/>
            <person name="Oyston P.C.F."/>
            <person name="Quail M.A."/>
            <person name="Rutherford K.M."/>
            <person name="Simmonds M."/>
            <person name="Skelton J."/>
            <person name="Stevens K."/>
            <person name="Whitehead S."/>
            <person name="Barrell B.G."/>
        </authorList>
    </citation>
    <scope>NUCLEOTIDE SEQUENCE [LARGE SCALE GENOMIC DNA]</scope>
    <source>
        <strain>CO-92 / Biovar Orientalis</strain>
    </source>
</reference>
<reference key="2">
    <citation type="journal article" date="2002" name="J. Bacteriol.">
        <title>Genome sequence of Yersinia pestis KIM.</title>
        <authorList>
            <person name="Deng W."/>
            <person name="Burland V."/>
            <person name="Plunkett G. III"/>
            <person name="Boutin A."/>
            <person name="Mayhew G.F."/>
            <person name="Liss P."/>
            <person name="Perna N.T."/>
            <person name="Rose D.J."/>
            <person name="Mau B."/>
            <person name="Zhou S."/>
            <person name="Schwartz D.C."/>
            <person name="Fetherston J.D."/>
            <person name="Lindler L.E."/>
            <person name="Brubaker R.R."/>
            <person name="Plano G.V."/>
            <person name="Straley S.C."/>
            <person name="McDonough K.A."/>
            <person name="Nilles M.L."/>
            <person name="Matson J.S."/>
            <person name="Blattner F.R."/>
            <person name="Perry R.D."/>
        </authorList>
    </citation>
    <scope>NUCLEOTIDE SEQUENCE [LARGE SCALE GENOMIC DNA]</scope>
    <source>
        <strain>KIM10+ / Biovar Mediaevalis</strain>
    </source>
</reference>
<reference key="3">
    <citation type="journal article" date="2004" name="DNA Res.">
        <title>Complete genome sequence of Yersinia pestis strain 91001, an isolate avirulent to humans.</title>
        <authorList>
            <person name="Song Y."/>
            <person name="Tong Z."/>
            <person name="Wang J."/>
            <person name="Wang L."/>
            <person name="Guo Z."/>
            <person name="Han Y."/>
            <person name="Zhang J."/>
            <person name="Pei D."/>
            <person name="Zhou D."/>
            <person name="Qin H."/>
            <person name="Pang X."/>
            <person name="Han Y."/>
            <person name="Zhai J."/>
            <person name="Li M."/>
            <person name="Cui B."/>
            <person name="Qi Z."/>
            <person name="Jin L."/>
            <person name="Dai R."/>
            <person name="Chen F."/>
            <person name="Li S."/>
            <person name="Ye C."/>
            <person name="Du Z."/>
            <person name="Lin W."/>
            <person name="Wang J."/>
            <person name="Yu J."/>
            <person name="Yang H."/>
            <person name="Wang J."/>
            <person name="Huang P."/>
            <person name="Yang R."/>
        </authorList>
    </citation>
    <scope>NUCLEOTIDE SEQUENCE [LARGE SCALE GENOMIC DNA]</scope>
    <source>
        <strain>91001 / Biovar Mediaevalis</strain>
    </source>
</reference>
<evidence type="ECO:0000255" key="1">
    <source>
        <dbReference type="HAMAP-Rule" id="MF_01321"/>
    </source>
</evidence>
<accession>Q8ZAP5</accession>
<accession>Q0WAR1</accession>